<accession>B1Y7G9</accession>
<reference key="1">
    <citation type="submission" date="2008-03" db="EMBL/GenBank/DDBJ databases">
        <title>Complete sequence of Leptothrix cholodnii SP-6.</title>
        <authorList>
            <consortium name="US DOE Joint Genome Institute"/>
            <person name="Copeland A."/>
            <person name="Lucas S."/>
            <person name="Lapidus A."/>
            <person name="Glavina del Rio T."/>
            <person name="Dalin E."/>
            <person name="Tice H."/>
            <person name="Bruce D."/>
            <person name="Goodwin L."/>
            <person name="Pitluck S."/>
            <person name="Chertkov O."/>
            <person name="Brettin T."/>
            <person name="Detter J.C."/>
            <person name="Han C."/>
            <person name="Kuske C.R."/>
            <person name="Schmutz J."/>
            <person name="Larimer F."/>
            <person name="Land M."/>
            <person name="Hauser L."/>
            <person name="Kyrpides N."/>
            <person name="Lykidis A."/>
            <person name="Emerson D."/>
            <person name="Richardson P."/>
        </authorList>
    </citation>
    <scope>NUCLEOTIDE SEQUENCE [LARGE SCALE GENOMIC DNA]</scope>
    <source>
        <strain>ATCC 51168 / LMG 8142 / SP-6</strain>
    </source>
</reference>
<name>EFG_LEPCP</name>
<keyword id="KW-0963">Cytoplasm</keyword>
<keyword id="KW-0251">Elongation factor</keyword>
<keyword id="KW-0342">GTP-binding</keyword>
<keyword id="KW-0547">Nucleotide-binding</keyword>
<keyword id="KW-0648">Protein biosynthesis</keyword>
<keyword id="KW-1185">Reference proteome</keyword>
<evidence type="ECO:0000255" key="1">
    <source>
        <dbReference type="HAMAP-Rule" id="MF_00054"/>
    </source>
</evidence>
<feature type="chain" id="PRO_1000091728" description="Elongation factor G">
    <location>
        <begin position="1"/>
        <end position="700"/>
    </location>
</feature>
<feature type="domain" description="tr-type G">
    <location>
        <begin position="8"/>
        <end position="290"/>
    </location>
</feature>
<feature type="binding site" evidence="1">
    <location>
        <begin position="17"/>
        <end position="24"/>
    </location>
    <ligand>
        <name>GTP</name>
        <dbReference type="ChEBI" id="CHEBI:37565"/>
    </ligand>
</feature>
<feature type="binding site" evidence="1">
    <location>
        <begin position="88"/>
        <end position="92"/>
    </location>
    <ligand>
        <name>GTP</name>
        <dbReference type="ChEBI" id="CHEBI:37565"/>
    </ligand>
</feature>
<feature type="binding site" evidence="1">
    <location>
        <begin position="142"/>
        <end position="145"/>
    </location>
    <ligand>
        <name>GTP</name>
        <dbReference type="ChEBI" id="CHEBI:37565"/>
    </ligand>
</feature>
<comment type="function">
    <text evidence="1">Catalyzes the GTP-dependent ribosomal translocation step during translation elongation. During this step, the ribosome changes from the pre-translocational (PRE) to the post-translocational (POST) state as the newly formed A-site-bound peptidyl-tRNA and P-site-bound deacylated tRNA move to the P and E sites, respectively. Catalyzes the coordinated movement of the two tRNA molecules, the mRNA and conformational changes in the ribosome.</text>
</comment>
<comment type="subcellular location">
    <subcellularLocation>
        <location evidence="1">Cytoplasm</location>
    </subcellularLocation>
</comment>
<comment type="similarity">
    <text evidence="1">Belongs to the TRAFAC class translation factor GTPase superfamily. Classic translation factor GTPase family. EF-G/EF-2 subfamily.</text>
</comment>
<protein>
    <recommendedName>
        <fullName evidence="1">Elongation factor G</fullName>
        <shortName evidence="1">EF-G</shortName>
    </recommendedName>
</protein>
<dbReference type="EMBL" id="CP001013">
    <property type="protein sequence ID" value="ACB36117.1"/>
    <property type="molecule type" value="Genomic_DNA"/>
</dbReference>
<dbReference type="RefSeq" id="WP_012348864.1">
    <property type="nucleotide sequence ID" value="NC_010524.1"/>
</dbReference>
<dbReference type="SMR" id="B1Y7G9"/>
<dbReference type="STRING" id="395495.Lcho_3863"/>
<dbReference type="KEGG" id="lch:Lcho_3863"/>
<dbReference type="eggNOG" id="COG0480">
    <property type="taxonomic scope" value="Bacteria"/>
</dbReference>
<dbReference type="HOGENOM" id="CLU_002794_4_1_4"/>
<dbReference type="OrthoDB" id="9804431at2"/>
<dbReference type="Proteomes" id="UP000001693">
    <property type="component" value="Chromosome"/>
</dbReference>
<dbReference type="GO" id="GO:0005737">
    <property type="term" value="C:cytoplasm"/>
    <property type="evidence" value="ECO:0007669"/>
    <property type="project" value="UniProtKB-SubCell"/>
</dbReference>
<dbReference type="GO" id="GO:0005525">
    <property type="term" value="F:GTP binding"/>
    <property type="evidence" value="ECO:0007669"/>
    <property type="project" value="UniProtKB-UniRule"/>
</dbReference>
<dbReference type="GO" id="GO:0003924">
    <property type="term" value="F:GTPase activity"/>
    <property type="evidence" value="ECO:0007669"/>
    <property type="project" value="InterPro"/>
</dbReference>
<dbReference type="GO" id="GO:0097216">
    <property type="term" value="F:guanosine tetraphosphate binding"/>
    <property type="evidence" value="ECO:0007669"/>
    <property type="project" value="UniProtKB-ARBA"/>
</dbReference>
<dbReference type="GO" id="GO:0003746">
    <property type="term" value="F:translation elongation factor activity"/>
    <property type="evidence" value="ECO:0007669"/>
    <property type="project" value="UniProtKB-UniRule"/>
</dbReference>
<dbReference type="GO" id="GO:0032790">
    <property type="term" value="P:ribosome disassembly"/>
    <property type="evidence" value="ECO:0007669"/>
    <property type="project" value="TreeGrafter"/>
</dbReference>
<dbReference type="CDD" id="cd01886">
    <property type="entry name" value="EF-G"/>
    <property type="match status" value="1"/>
</dbReference>
<dbReference type="CDD" id="cd16262">
    <property type="entry name" value="EFG_III"/>
    <property type="match status" value="1"/>
</dbReference>
<dbReference type="CDD" id="cd01434">
    <property type="entry name" value="EFG_mtEFG1_IV"/>
    <property type="match status" value="1"/>
</dbReference>
<dbReference type="CDD" id="cd03713">
    <property type="entry name" value="EFG_mtEFG_C"/>
    <property type="match status" value="1"/>
</dbReference>
<dbReference type="CDD" id="cd04088">
    <property type="entry name" value="EFG_mtEFG_II"/>
    <property type="match status" value="1"/>
</dbReference>
<dbReference type="FunFam" id="2.40.30.10:FF:000006">
    <property type="entry name" value="Elongation factor G"/>
    <property type="match status" value="1"/>
</dbReference>
<dbReference type="FunFam" id="3.30.230.10:FF:000003">
    <property type="entry name" value="Elongation factor G"/>
    <property type="match status" value="1"/>
</dbReference>
<dbReference type="FunFam" id="3.30.70.240:FF:000001">
    <property type="entry name" value="Elongation factor G"/>
    <property type="match status" value="1"/>
</dbReference>
<dbReference type="FunFam" id="3.30.70.870:FF:000001">
    <property type="entry name" value="Elongation factor G"/>
    <property type="match status" value="1"/>
</dbReference>
<dbReference type="FunFam" id="3.40.50.300:FF:000029">
    <property type="entry name" value="Elongation factor G"/>
    <property type="match status" value="1"/>
</dbReference>
<dbReference type="Gene3D" id="3.30.230.10">
    <property type="match status" value="1"/>
</dbReference>
<dbReference type="Gene3D" id="3.30.70.240">
    <property type="match status" value="1"/>
</dbReference>
<dbReference type="Gene3D" id="3.30.70.870">
    <property type="entry name" value="Elongation Factor G (Translational Gtpase), domain 3"/>
    <property type="match status" value="1"/>
</dbReference>
<dbReference type="Gene3D" id="3.40.50.300">
    <property type="entry name" value="P-loop containing nucleotide triphosphate hydrolases"/>
    <property type="match status" value="1"/>
</dbReference>
<dbReference type="Gene3D" id="2.40.30.10">
    <property type="entry name" value="Translation factors"/>
    <property type="match status" value="1"/>
</dbReference>
<dbReference type="HAMAP" id="MF_00054_B">
    <property type="entry name" value="EF_G_EF_2_B"/>
    <property type="match status" value="1"/>
</dbReference>
<dbReference type="InterPro" id="IPR041095">
    <property type="entry name" value="EFG_II"/>
</dbReference>
<dbReference type="InterPro" id="IPR009022">
    <property type="entry name" value="EFG_III"/>
</dbReference>
<dbReference type="InterPro" id="IPR035647">
    <property type="entry name" value="EFG_III/V"/>
</dbReference>
<dbReference type="InterPro" id="IPR047872">
    <property type="entry name" value="EFG_IV"/>
</dbReference>
<dbReference type="InterPro" id="IPR035649">
    <property type="entry name" value="EFG_V"/>
</dbReference>
<dbReference type="InterPro" id="IPR000640">
    <property type="entry name" value="EFG_V-like"/>
</dbReference>
<dbReference type="InterPro" id="IPR004161">
    <property type="entry name" value="EFTu-like_2"/>
</dbReference>
<dbReference type="InterPro" id="IPR031157">
    <property type="entry name" value="G_TR_CS"/>
</dbReference>
<dbReference type="InterPro" id="IPR027417">
    <property type="entry name" value="P-loop_NTPase"/>
</dbReference>
<dbReference type="InterPro" id="IPR020568">
    <property type="entry name" value="Ribosomal_Su5_D2-typ_SF"/>
</dbReference>
<dbReference type="InterPro" id="IPR014721">
    <property type="entry name" value="Ribsml_uS5_D2-typ_fold_subgr"/>
</dbReference>
<dbReference type="InterPro" id="IPR005225">
    <property type="entry name" value="Small_GTP-bd"/>
</dbReference>
<dbReference type="InterPro" id="IPR000795">
    <property type="entry name" value="T_Tr_GTP-bd_dom"/>
</dbReference>
<dbReference type="InterPro" id="IPR009000">
    <property type="entry name" value="Transl_B-barrel_sf"/>
</dbReference>
<dbReference type="InterPro" id="IPR004540">
    <property type="entry name" value="Transl_elong_EFG/EF2"/>
</dbReference>
<dbReference type="InterPro" id="IPR005517">
    <property type="entry name" value="Transl_elong_EFG/EF2_IV"/>
</dbReference>
<dbReference type="NCBIfam" id="TIGR00484">
    <property type="entry name" value="EF-G"/>
    <property type="match status" value="1"/>
</dbReference>
<dbReference type="NCBIfam" id="NF009381">
    <property type="entry name" value="PRK12740.1-5"/>
    <property type="match status" value="1"/>
</dbReference>
<dbReference type="NCBIfam" id="TIGR00231">
    <property type="entry name" value="small_GTP"/>
    <property type="match status" value="1"/>
</dbReference>
<dbReference type="PANTHER" id="PTHR43261:SF1">
    <property type="entry name" value="RIBOSOME-RELEASING FACTOR 2, MITOCHONDRIAL"/>
    <property type="match status" value="1"/>
</dbReference>
<dbReference type="PANTHER" id="PTHR43261">
    <property type="entry name" value="TRANSLATION ELONGATION FACTOR G-RELATED"/>
    <property type="match status" value="1"/>
</dbReference>
<dbReference type="Pfam" id="PF00679">
    <property type="entry name" value="EFG_C"/>
    <property type="match status" value="1"/>
</dbReference>
<dbReference type="Pfam" id="PF14492">
    <property type="entry name" value="EFG_III"/>
    <property type="match status" value="1"/>
</dbReference>
<dbReference type="Pfam" id="PF03764">
    <property type="entry name" value="EFG_IV"/>
    <property type="match status" value="1"/>
</dbReference>
<dbReference type="Pfam" id="PF00009">
    <property type="entry name" value="GTP_EFTU"/>
    <property type="match status" value="1"/>
</dbReference>
<dbReference type="Pfam" id="PF03144">
    <property type="entry name" value="GTP_EFTU_D2"/>
    <property type="match status" value="1"/>
</dbReference>
<dbReference type="PRINTS" id="PR00315">
    <property type="entry name" value="ELONGATNFCT"/>
</dbReference>
<dbReference type="SMART" id="SM00838">
    <property type="entry name" value="EFG_C"/>
    <property type="match status" value="1"/>
</dbReference>
<dbReference type="SMART" id="SM00889">
    <property type="entry name" value="EFG_IV"/>
    <property type="match status" value="1"/>
</dbReference>
<dbReference type="SUPFAM" id="SSF54980">
    <property type="entry name" value="EF-G C-terminal domain-like"/>
    <property type="match status" value="2"/>
</dbReference>
<dbReference type="SUPFAM" id="SSF52540">
    <property type="entry name" value="P-loop containing nucleoside triphosphate hydrolases"/>
    <property type="match status" value="1"/>
</dbReference>
<dbReference type="SUPFAM" id="SSF54211">
    <property type="entry name" value="Ribosomal protein S5 domain 2-like"/>
    <property type="match status" value="1"/>
</dbReference>
<dbReference type="SUPFAM" id="SSF50447">
    <property type="entry name" value="Translation proteins"/>
    <property type="match status" value="1"/>
</dbReference>
<dbReference type="PROSITE" id="PS00301">
    <property type="entry name" value="G_TR_1"/>
    <property type="match status" value="1"/>
</dbReference>
<dbReference type="PROSITE" id="PS51722">
    <property type="entry name" value="G_TR_2"/>
    <property type="match status" value="1"/>
</dbReference>
<gene>
    <name evidence="1" type="primary">fusA</name>
    <name type="ordered locus">Lcho_3863</name>
</gene>
<organism>
    <name type="scientific">Leptothrix cholodnii (strain ATCC 51168 / LMG 8142 / SP-6)</name>
    <name type="common">Leptothrix discophora (strain SP-6)</name>
    <dbReference type="NCBI Taxonomy" id="395495"/>
    <lineage>
        <taxon>Bacteria</taxon>
        <taxon>Pseudomonadati</taxon>
        <taxon>Pseudomonadota</taxon>
        <taxon>Betaproteobacteria</taxon>
        <taxon>Burkholderiales</taxon>
        <taxon>Sphaerotilaceae</taxon>
        <taxon>Leptothrix</taxon>
    </lineage>
</organism>
<proteinExistence type="inferred from homology"/>
<sequence>MARQTPIERYRNIGISAHIDAGKTTTTERILYYTGVNHKIGEVHDGAATMDWMEQEQERGITITSAATTCFWKGMDRSLPEHRFNIIDTPGHVDFTIEVERSMRVLDGACMVYCAVGGVQPQSETVWRQANKYKVPRLAFVNKMDRTGANFFKVVDQMKTRLRANPVPVVVPIGAEDSFTGVVDLLKMKAIIWDEASQGMKFSYEDIPAGLEGVAQEWREKMVEAAAEASEELMNKYLETGDLTEDEIKLALRTRTIACEIQPMLCGTAFKNKGVQRMLDAVIDYLPSPVDIPPVTGTDDDDQPISRRADDKEKFSALAFKLMTDPFVGQLTFVRVYSGVLQSGSSVYNPIRGKKERIGRILQMHANQREEIKEILAGDIAACVGLKEVTTGETLCDIDSPITLVKMIFPEPVISQAVEPKTKADQEKMGIALGRLAAEDPSFRVRTDEESGQTIISGMGELHLEIIVDRMKREFGVEANVGKPQVAYRETIRDLVKDVEGKFVRQSGGKGQYGHVVLTVEPQEPGAGFQFVDAIKGGVVPREFIPAVEKGLIDTLPNGVLAGFPVVDVKVTLTFGSYHEVDSNENAFKMAASMGFKDGMRKAKPVILEPMMAVEVETPEDYAGTVMGDLSSRRGMVQGMDDMVGGGKVIKAEVPLSEMFGYSTSLRSATQGRATYTMEFKHYSEAPKNVADAIITARGK</sequence>